<name>DAPA_NITSB</name>
<evidence type="ECO:0000255" key="1">
    <source>
        <dbReference type="HAMAP-Rule" id="MF_00418"/>
    </source>
</evidence>
<evidence type="ECO:0000305" key="2"/>
<feature type="chain" id="PRO_0000340972" description="4-hydroxy-tetrahydrodipicolinate synthase">
    <location>
        <begin position="1"/>
        <end position="294"/>
    </location>
</feature>
<feature type="active site" description="Proton donor/acceptor" evidence="1">
    <location>
        <position position="135"/>
    </location>
</feature>
<feature type="active site" description="Schiff-base intermediate with substrate" evidence="1">
    <location>
        <position position="164"/>
    </location>
</feature>
<feature type="binding site" evidence="1">
    <location>
        <position position="46"/>
    </location>
    <ligand>
        <name>pyruvate</name>
        <dbReference type="ChEBI" id="CHEBI:15361"/>
    </ligand>
</feature>
<feature type="binding site" evidence="1">
    <location>
        <position position="205"/>
    </location>
    <ligand>
        <name>pyruvate</name>
        <dbReference type="ChEBI" id="CHEBI:15361"/>
    </ligand>
</feature>
<feature type="site" description="Part of a proton relay during catalysis" evidence="1">
    <location>
        <position position="45"/>
    </location>
</feature>
<feature type="site" description="Part of a proton relay during catalysis" evidence="1">
    <location>
        <position position="109"/>
    </location>
</feature>
<gene>
    <name evidence="1" type="primary">dapA</name>
    <name type="ordered locus">NIS_0699</name>
</gene>
<protein>
    <recommendedName>
        <fullName evidence="1">4-hydroxy-tetrahydrodipicolinate synthase</fullName>
        <shortName evidence="1">HTPA synthase</shortName>
        <ecNumber evidence="1">4.3.3.7</ecNumber>
    </recommendedName>
</protein>
<reference key="1">
    <citation type="journal article" date="2007" name="Proc. Natl. Acad. Sci. U.S.A.">
        <title>Deep-sea vent epsilon-proteobacterial genomes provide insights into emergence of pathogens.</title>
        <authorList>
            <person name="Nakagawa S."/>
            <person name="Takaki Y."/>
            <person name="Shimamura S."/>
            <person name="Reysenbach A.-L."/>
            <person name="Takai K."/>
            <person name="Horikoshi K."/>
        </authorList>
    </citation>
    <scope>NUCLEOTIDE SEQUENCE [LARGE SCALE GENOMIC DNA]</scope>
    <source>
        <strain>SB155-2</strain>
    </source>
</reference>
<dbReference type="EC" id="4.3.3.7" evidence="1"/>
<dbReference type="EMBL" id="AP009178">
    <property type="protein sequence ID" value="BAF69813.1"/>
    <property type="molecule type" value="Genomic_DNA"/>
</dbReference>
<dbReference type="RefSeq" id="WP_012082076.1">
    <property type="nucleotide sequence ID" value="NC_009662.1"/>
</dbReference>
<dbReference type="SMR" id="A6Q2V4"/>
<dbReference type="FunCoup" id="A6Q2V4">
    <property type="interactions" value="450"/>
</dbReference>
<dbReference type="STRING" id="387092.NIS_0699"/>
<dbReference type="KEGG" id="nis:NIS_0699"/>
<dbReference type="eggNOG" id="COG0329">
    <property type="taxonomic scope" value="Bacteria"/>
</dbReference>
<dbReference type="HOGENOM" id="CLU_049343_7_0_7"/>
<dbReference type="InParanoid" id="A6Q2V4"/>
<dbReference type="OrthoDB" id="9782828at2"/>
<dbReference type="UniPathway" id="UPA00034">
    <property type="reaction ID" value="UER00017"/>
</dbReference>
<dbReference type="Proteomes" id="UP000001118">
    <property type="component" value="Chromosome"/>
</dbReference>
<dbReference type="GO" id="GO:0005829">
    <property type="term" value="C:cytosol"/>
    <property type="evidence" value="ECO:0007669"/>
    <property type="project" value="TreeGrafter"/>
</dbReference>
<dbReference type="GO" id="GO:0008840">
    <property type="term" value="F:4-hydroxy-tetrahydrodipicolinate synthase activity"/>
    <property type="evidence" value="ECO:0007669"/>
    <property type="project" value="UniProtKB-UniRule"/>
</dbReference>
<dbReference type="GO" id="GO:0019877">
    <property type="term" value="P:diaminopimelate biosynthetic process"/>
    <property type="evidence" value="ECO:0007669"/>
    <property type="project" value="UniProtKB-UniRule"/>
</dbReference>
<dbReference type="GO" id="GO:0009089">
    <property type="term" value="P:lysine biosynthetic process via diaminopimelate"/>
    <property type="evidence" value="ECO:0007669"/>
    <property type="project" value="UniProtKB-UniRule"/>
</dbReference>
<dbReference type="CDD" id="cd00950">
    <property type="entry name" value="DHDPS"/>
    <property type="match status" value="1"/>
</dbReference>
<dbReference type="Gene3D" id="3.20.20.70">
    <property type="entry name" value="Aldolase class I"/>
    <property type="match status" value="1"/>
</dbReference>
<dbReference type="HAMAP" id="MF_00418">
    <property type="entry name" value="DapA"/>
    <property type="match status" value="1"/>
</dbReference>
<dbReference type="InterPro" id="IPR013785">
    <property type="entry name" value="Aldolase_TIM"/>
</dbReference>
<dbReference type="InterPro" id="IPR005263">
    <property type="entry name" value="DapA"/>
</dbReference>
<dbReference type="InterPro" id="IPR002220">
    <property type="entry name" value="DapA-like"/>
</dbReference>
<dbReference type="InterPro" id="IPR020625">
    <property type="entry name" value="Schiff_base-form_aldolases_AS"/>
</dbReference>
<dbReference type="InterPro" id="IPR020624">
    <property type="entry name" value="Schiff_base-form_aldolases_CS"/>
</dbReference>
<dbReference type="NCBIfam" id="TIGR00674">
    <property type="entry name" value="dapA"/>
    <property type="match status" value="1"/>
</dbReference>
<dbReference type="PANTHER" id="PTHR12128:SF66">
    <property type="entry name" value="4-HYDROXY-2-OXOGLUTARATE ALDOLASE, MITOCHONDRIAL"/>
    <property type="match status" value="1"/>
</dbReference>
<dbReference type="PANTHER" id="PTHR12128">
    <property type="entry name" value="DIHYDRODIPICOLINATE SYNTHASE"/>
    <property type="match status" value="1"/>
</dbReference>
<dbReference type="Pfam" id="PF00701">
    <property type="entry name" value="DHDPS"/>
    <property type="match status" value="1"/>
</dbReference>
<dbReference type="PIRSF" id="PIRSF001365">
    <property type="entry name" value="DHDPS"/>
    <property type="match status" value="1"/>
</dbReference>
<dbReference type="PRINTS" id="PR00146">
    <property type="entry name" value="DHPICSNTHASE"/>
</dbReference>
<dbReference type="SMART" id="SM01130">
    <property type="entry name" value="DHDPS"/>
    <property type="match status" value="1"/>
</dbReference>
<dbReference type="SUPFAM" id="SSF51569">
    <property type="entry name" value="Aldolase"/>
    <property type="match status" value="1"/>
</dbReference>
<dbReference type="PROSITE" id="PS00665">
    <property type="entry name" value="DHDPS_1"/>
    <property type="match status" value="1"/>
</dbReference>
<dbReference type="PROSITE" id="PS00666">
    <property type="entry name" value="DHDPS_2"/>
    <property type="match status" value="1"/>
</dbReference>
<sequence>MEKVKGAMTALITPFRNGKLDEEAYARLIQRQIDNAIDAVVPVGTTGESATLSHAEHKRCIEIAVEVCKGTSTKVMAGAGSNATHEAIDLAQFAQKAGADAILSVSPYYNKPTQEGLYQHYKALAESVDIPVLLYNVPGRTGVDIKPETVCRLFDDVNNIYGIKEATGSIERCVELLAKRPELYVISGDDAINYPIIANGGMGVISVTANLLPDKISMLVHAGLAGQFDTAKMINDELFDINKALFCESNPIPIKAAMYIAGLIDTLEYRLPLLEPSKEHMQLIEKTLAKYEVV</sequence>
<organism>
    <name type="scientific">Nitratiruptor sp. (strain SB155-2)</name>
    <dbReference type="NCBI Taxonomy" id="387092"/>
    <lineage>
        <taxon>Bacteria</taxon>
        <taxon>Pseudomonadati</taxon>
        <taxon>Campylobacterota</taxon>
        <taxon>Epsilonproteobacteria</taxon>
        <taxon>Nautiliales</taxon>
        <taxon>Nitratiruptoraceae</taxon>
        <taxon>Nitratiruptor</taxon>
    </lineage>
</organism>
<keyword id="KW-0028">Amino-acid biosynthesis</keyword>
<keyword id="KW-0963">Cytoplasm</keyword>
<keyword id="KW-0220">Diaminopimelate biosynthesis</keyword>
<keyword id="KW-0456">Lyase</keyword>
<keyword id="KW-0457">Lysine biosynthesis</keyword>
<keyword id="KW-1185">Reference proteome</keyword>
<keyword id="KW-0704">Schiff base</keyword>
<comment type="function">
    <text evidence="1">Catalyzes the condensation of (S)-aspartate-beta-semialdehyde [(S)-ASA] and pyruvate to 4-hydroxy-tetrahydrodipicolinate (HTPA).</text>
</comment>
<comment type="catalytic activity">
    <reaction evidence="1">
        <text>L-aspartate 4-semialdehyde + pyruvate = (2S,4S)-4-hydroxy-2,3,4,5-tetrahydrodipicolinate + H2O + H(+)</text>
        <dbReference type="Rhea" id="RHEA:34171"/>
        <dbReference type="ChEBI" id="CHEBI:15361"/>
        <dbReference type="ChEBI" id="CHEBI:15377"/>
        <dbReference type="ChEBI" id="CHEBI:15378"/>
        <dbReference type="ChEBI" id="CHEBI:67139"/>
        <dbReference type="ChEBI" id="CHEBI:537519"/>
        <dbReference type="EC" id="4.3.3.7"/>
    </reaction>
</comment>
<comment type="pathway">
    <text evidence="1">Amino-acid biosynthesis; L-lysine biosynthesis via DAP pathway; (S)-tetrahydrodipicolinate from L-aspartate: step 3/4.</text>
</comment>
<comment type="subunit">
    <text evidence="1">Homotetramer; dimer of dimers.</text>
</comment>
<comment type="subcellular location">
    <subcellularLocation>
        <location evidence="1">Cytoplasm</location>
    </subcellularLocation>
</comment>
<comment type="similarity">
    <text evidence="1">Belongs to the DapA family.</text>
</comment>
<comment type="caution">
    <text evidence="2">Was originally thought to be a dihydrodipicolinate synthase (DHDPS), catalyzing the condensation of (S)-aspartate-beta-semialdehyde [(S)-ASA] and pyruvate to dihydrodipicolinate (DHDP). However, it was shown in E.coli that the product of the enzymatic reaction is not dihydrodipicolinate but in fact (4S)-4-hydroxy-2,3,4,5-tetrahydro-(2S)-dipicolinic acid (HTPA), and that the consecutive dehydration reaction leading to DHDP is not spontaneous but catalyzed by DapB.</text>
</comment>
<accession>A6Q2V4</accession>
<proteinExistence type="inferred from homology"/>